<protein>
    <recommendedName>
        <fullName evidence="1">Small ribosomal subunit protein bS18</fullName>
    </recommendedName>
    <alternativeName>
        <fullName evidence="2">30S ribosomal protein S18</fullName>
    </alternativeName>
</protein>
<reference key="1">
    <citation type="journal article" date="2005" name="Nat. Biotechnol.">
        <title>Complete genome sequence of the acetic acid bacterium Gluconobacter oxydans.</title>
        <authorList>
            <person name="Prust C."/>
            <person name="Hoffmeister M."/>
            <person name="Liesegang H."/>
            <person name="Wiezer A."/>
            <person name="Fricke W.F."/>
            <person name="Ehrenreich A."/>
            <person name="Gottschalk G."/>
            <person name="Deppenmeier U."/>
        </authorList>
    </citation>
    <scope>NUCLEOTIDE SEQUENCE [LARGE SCALE GENOMIC DNA]</scope>
    <source>
        <strain>621H</strain>
    </source>
</reference>
<accession>Q5FU58</accession>
<name>RS18_GLUOX</name>
<feature type="chain" id="PRO_0000345480" description="Small ribosomal subunit protein bS18">
    <location>
        <begin position="1"/>
        <end position="96"/>
    </location>
</feature>
<comment type="function">
    <text evidence="1">Binds as a heterodimer with protein bS6 to the central domain of the 16S rRNA, where it helps stabilize the platform of the 30S subunit.</text>
</comment>
<comment type="subunit">
    <text evidence="1">Part of the 30S ribosomal subunit. Forms a tight heterodimer with protein bS6.</text>
</comment>
<comment type="similarity">
    <text evidence="1">Belongs to the bacterial ribosomal protein bS18 family.</text>
</comment>
<evidence type="ECO:0000255" key="1">
    <source>
        <dbReference type="HAMAP-Rule" id="MF_00270"/>
    </source>
</evidence>
<evidence type="ECO:0000305" key="2"/>
<proteinExistence type="inferred from homology"/>
<sequence>MSETITPDVHEVNPAARRTAVGARRPFYRRRKSCPFSGPNAPKIDYKDVRLLSRFLSERGKIVPSRITAVSAKKQRELAQAIKRARFLALLPYVVN</sequence>
<keyword id="KW-1185">Reference proteome</keyword>
<keyword id="KW-0687">Ribonucleoprotein</keyword>
<keyword id="KW-0689">Ribosomal protein</keyword>
<keyword id="KW-0694">RNA-binding</keyword>
<keyword id="KW-0699">rRNA-binding</keyword>
<gene>
    <name evidence="1" type="primary">rpsR</name>
    <name type="ordered locus">GOX0305</name>
</gene>
<dbReference type="EMBL" id="CP000009">
    <property type="protein sequence ID" value="AAW60088.1"/>
    <property type="molecule type" value="Genomic_DNA"/>
</dbReference>
<dbReference type="RefSeq" id="WP_011251891.1">
    <property type="nucleotide sequence ID" value="NC_006677.1"/>
</dbReference>
<dbReference type="SMR" id="Q5FU58"/>
<dbReference type="STRING" id="290633.GOX0305"/>
<dbReference type="KEGG" id="gox:GOX0305"/>
<dbReference type="eggNOG" id="COG0238">
    <property type="taxonomic scope" value="Bacteria"/>
</dbReference>
<dbReference type="HOGENOM" id="CLU_148710_2_1_5"/>
<dbReference type="Proteomes" id="UP000006375">
    <property type="component" value="Chromosome"/>
</dbReference>
<dbReference type="GO" id="GO:0022627">
    <property type="term" value="C:cytosolic small ribosomal subunit"/>
    <property type="evidence" value="ECO:0007669"/>
    <property type="project" value="TreeGrafter"/>
</dbReference>
<dbReference type="GO" id="GO:0070181">
    <property type="term" value="F:small ribosomal subunit rRNA binding"/>
    <property type="evidence" value="ECO:0007669"/>
    <property type="project" value="TreeGrafter"/>
</dbReference>
<dbReference type="GO" id="GO:0003735">
    <property type="term" value="F:structural constituent of ribosome"/>
    <property type="evidence" value="ECO:0007669"/>
    <property type="project" value="InterPro"/>
</dbReference>
<dbReference type="GO" id="GO:0006412">
    <property type="term" value="P:translation"/>
    <property type="evidence" value="ECO:0007669"/>
    <property type="project" value="UniProtKB-UniRule"/>
</dbReference>
<dbReference type="Gene3D" id="4.10.640.10">
    <property type="entry name" value="Ribosomal protein S18"/>
    <property type="match status" value="1"/>
</dbReference>
<dbReference type="HAMAP" id="MF_00270">
    <property type="entry name" value="Ribosomal_bS18"/>
    <property type="match status" value="1"/>
</dbReference>
<dbReference type="InterPro" id="IPR001648">
    <property type="entry name" value="Ribosomal_bS18"/>
</dbReference>
<dbReference type="InterPro" id="IPR018275">
    <property type="entry name" value="Ribosomal_bS18_CS"/>
</dbReference>
<dbReference type="InterPro" id="IPR036870">
    <property type="entry name" value="Ribosomal_bS18_sf"/>
</dbReference>
<dbReference type="NCBIfam" id="TIGR00165">
    <property type="entry name" value="S18"/>
    <property type="match status" value="1"/>
</dbReference>
<dbReference type="PANTHER" id="PTHR13479">
    <property type="entry name" value="30S RIBOSOMAL PROTEIN S18"/>
    <property type="match status" value="1"/>
</dbReference>
<dbReference type="PANTHER" id="PTHR13479:SF40">
    <property type="entry name" value="SMALL RIBOSOMAL SUBUNIT PROTEIN BS18M"/>
    <property type="match status" value="1"/>
</dbReference>
<dbReference type="Pfam" id="PF01084">
    <property type="entry name" value="Ribosomal_S18"/>
    <property type="match status" value="1"/>
</dbReference>
<dbReference type="PRINTS" id="PR00974">
    <property type="entry name" value="RIBOSOMALS18"/>
</dbReference>
<dbReference type="SUPFAM" id="SSF46911">
    <property type="entry name" value="Ribosomal protein S18"/>
    <property type="match status" value="1"/>
</dbReference>
<dbReference type="PROSITE" id="PS00057">
    <property type="entry name" value="RIBOSOMAL_S18"/>
    <property type="match status" value="1"/>
</dbReference>
<organism>
    <name type="scientific">Gluconobacter oxydans (strain 621H)</name>
    <name type="common">Gluconobacter suboxydans</name>
    <dbReference type="NCBI Taxonomy" id="290633"/>
    <lineage>
        <taxon>Bacteria</taxon>
        <taxon>Pseudomonadati</taxon>
        <taxon>Pseudomonadota</taxon>
        <taxon>Alphaproteobacteria</taxon>
        <taxon>Acetobacterales</taxon>
        <taxon>Acetobacteraceae</taxon>
        <taxon>Gluconobacter</taxon>
    </lineage>
</organism>